<feature type="chain" id="PRO_1000008859" description="Elongation factor G">
    <location>
        <begin position="1"/>
        <end position="696"/>
    </location>
</feature>
<feature type="domain" description="tr-type G">
    <location>
        <begin position="8"/>
        <end position="290"/>
    </location>
</feature>
<feature type="binding site" evidence="1">
    <location>
        <begin position="17"/>
        <end position="24"/>
    </location>
    <ligand>
        <name>GTP</name>
        <dbReference type="ChEBI" id="CHEBI:37565"/>
    </ligand>
</feature>
<feature type="binding site" evidence="1">
    <location>
        <begin position="88"/>
        <end position="92"/>
    </location>
    <ligand>
        <name>GTP</name>
        <dbReference type="ChEBI" id="CHEBI:37565"/>
    </ligand>
</feature>
<feature type="binding site" evidence="1">
    <location>
        <begin position="142"/>
        <end position="145"/>
    </location>
    <ligand>
        <name>GTP</name>
        <dbReference type="ChEBI" id="CHEBI:37565"/>
    </ligand>
</feature>
<name>EFG_NITEC</name>
<dbReference type="EMBL" id="CP000450">
    <property type="protein sequence ID" value="ABI58828.1"/>
    <property type="molecule type" value="Genomic_DNA"/>
</dbReference>
<dbReference type="RefSeq" id="WP_011633670.1">
    <property type="nucleotide sequence ID" value="NC_008344.1"/>
</dbReference>
<dbReference type="SMR" id="Q0AIJ8"/>
<dbReference type="STRING" id="335283.Neut_0555"/>
<dbReference type="KEGG" id="net:Neut_0555"/>
<dbReference type="eggNOG" id="COG0480">
    <property type="taxonomic scope" value="Bacteria"/>
</dbReference>
<dbReference type="HOGENOM" id="CLU_002794_4_1_4"/>
<dbReference type="OrthoDB" id="9804431at2"/>
<dbReference type="Proteomes" id="UP000001966">
    <property type="component" value="Chromosome"/>
</dbReference>
<dbReference type="GO" id="GO:0005737">
    <property type="term" value="C:cytoplasm"/>
    <property type="evidence" value="ECO:0007669"/>
    <property type="project" value="UniProtKB-SubCell"/>
</dbReference>
<dbReference type="GO" id="GO:0005525">
    <property type="term" value="F:GTP binding"/>
    <property type="evidence" value="ECO:0007669"/>
    <property type="project" value="UniProtKB-UniRule"/>
</dbReference>
<dbReference type="GO" id="GO:0003924">
    <property type="term" value="F:GTPase activity"/>
    <property type="evidence" value="ECO:0007669"/>
    <property type="project" value="InterPro"/>
</dbReference>
<dbReference type="GO" id="GO:0097216">
    <property type="term" value="F:guanosine tetraphosphate binding"/>
    <property type="evidence" value="ECO:0007669"/>
    <property type="project" value="UniProtKB-ARBA"/>
</dbReference>
<dbReference type="GO" id="GO:0003746">
    <property type="term" value="F:translation elongation factor activity"/>
    <property type="evidence" value="ECO:0007669"/>
    <property type="project" value="UniProtKB-UniRule"/>
</dbReference>
<dbReference type="GO" id="GO:0032790">
    <property type="term" value="P:ribosome disassembly"/>
    <property type="evidence" value="ECO:0007669"/>
    <property type="project" value="TreeGrafter"/>
</dbReference>
<dbReference type="CDD" id="cd01886">
    <property type="entry name" value="EF-G"/>
    <property type="match status" value="1"/>
</dbReference>
<dbReference type="CDD" id="cd16262">
    <property type="entry name" value="EFG_III"/>
    <property type="match status" value="1"/>
</dbReference>
<dbReference type="CDD" id="cd01434">
    <property type="entry name" value="EFG_mtEFG1_IV"/>
    <property type="match status" value="1"/>
</dbReference>
<dbReference type="CDD" id="cd03713">
    <property type="entry name" value="EFG_mtEFG_C"/>
    <property type="match status" value="1"/>
</dbReference>
<dbReference type="CDD" id="cd04088">
    <property type="entry name" value="EFG_mtEFG_II"/>
    <property type="match status" value="1"/>
</dbReference>
<dbReference type="FunFam" id="2.40.30.10:FF:000006">
    <property type="entry name" value="Elongation factor G"/>
    <property type="match status" value="1"/>
</dbReference>
<dbReference type="FunFam" id="3.30.230.10:FF:000003">
    <property type="entry name" value="Elongation factor G"/>
    <property type="match status" value="1"/>
</dbReference>
<dbReference type="FunFam" id="3.30.70.240:FF:000001">
    <property type="entry name" value="Elongation factor G"/>
    <property type="match status" value="1"/>
</dbReference>
<dbReference type="FunFam" id="3.30.70.870:FF:000001">
    <property type="entry name" value="Elongation factor G"/>
    <property type="match status" value="1"/>
</dbReference>
<dbReference type="FunFam" id="3.40.50.300:FF:000029">
    <property type="entry name" value="Elongation factor G"/>
    <property type="match status" value="1"/>
</dbReference>
<dbReference type="Gene3D" id="3.30.230.10">
    <property type="match status" value="1"/>
</dbReference>
<dbReference type="Gene3D" id="3.30.70.240">
    <property type="match status" value="1"/>
</dbReference>
<dbReference type="Gene3D" id="3.30.70.870">
    <property type="entry name" value="Elongation Factor G (Translational Gtpase), domain 3"/>
    <property type="match status" value="1"/>
</dbReference>
<dbReference type="Gene3D" id="3.40.50.300">
    <property type="entry name" value="P-loop containing nucleotide triphosphate hydrolases"/>
    <property type="match status" value="1"/>
</dbReference>
<dbReference type="Gene3D" id="2.40.30.10">
    <property type="entry name" value="Translation factors"/>
    <property type="match status" value="1"/>
</dbReference>
<dbReference type="HAMAP" id="MF_00054_B">
    <property type="entry name" value="EF_G_EF_2_B"/>
    <property type="match status" value="1"/>
</dbReference>
<dbReference type="InterPro" id="IPR041095">
    <property type="entry name" value="EFG_II"/>
</dbReference>
<dbReference type="InterPro" id="IPR009022">
    <property type="entry name" value="EFG_III"/>
</dbReference>
<dbReference type="InterPro" id="IPR035647">
    <property type="entry name" value="EFG_III/V"/>
</dbReference>
<dbReference type="InterPro" id="IPR047872">
    <property type="entry name" value="EFG_IV"/>
</dbReference>
<dbReference type="InterPro" id="IPR035649">
    <property type="entry name" value="EFG_V"/>
</dbReference>
<dbReference type="InterPro" id="IPR000640">
    <property type="entry name" value="EFG_V-like"/>
</dbReference>
<dbReference type="InterPro" id="IPR004161">
    <property type="entry name" value="EFTu-like_2"/>
</dbReference>
<dbReference type="InterPro" id="IPR031157">
    <property type="entry name" value="G_TR_CS"/>
</dbReference>
<dbReference type="InterPro" id="IPR027417">
    <property type="entry name" value="P-loop_NTPase"/>
</dbReference>
<dbReference type="InterPro" id="IPR020568">
    <property type="entry name" value="Ribosomal_Su5_D2-typ_SF"/>
</dbReference>
<dbReference type="InterPro" id="IPR014721">
    <property type="entry name" value="Ribsml_uS5_D2-typ_fold_subgr"/>
</dbReference>
<dbReference type="InterPro" id="IPR005225">
    <property type="entry name" value="Small_GTP-bd"/>
</dbReference>
<dbReference type="InterPro" id="IPR000795">
    <property type="entry name" value="T_Tr_GTP-bd_dom"/>
</dbReference>
<dbReference type="InterPro" id="IPR009000">
    <property type="entry name" value="Transl_B-barrel_sf"/>
</dbReference>
<dbReference type="InterPro" id="IPR004540">
    <property type="entry name" value="Transl_elong_EFG/EF2"/>
</dbReference>
<dbReference type="InterPro" id="IPR005517">
    <property type="entry name" value="Transl_elong_EFG/EF2_IV"/>
</dbReference>
<dbReference type="NCBIfam" id="TIGR00484">
    <property type="entry name" value="EF-G"/>
    <property type="match status" value="1"/>
</dbReference>
<dbReference type="NCBIfam" id="NF009379">
    <property type="entry name" value="PRK12740.1-3"/>
    <property type="match status" value="1"/>
</dbReference>
<dbReference type="NCBIfam" id="NF009381">
    <property type="entry name" value="PRK12740.1-5"/>
    <property type="match status" value="1"/>
</dbReference>
<dbReference type="NCBIfam" id="TIGR00231">
    <property type="entry name" value="small_GTP"/>
    <property type="match status" value="1"/>
</dbReference>
<dbReference type="PANTHER" id="PTHR43261:SF1">
    <property type="entry name" value="RIBOSOME-RELEASING FACTOR 2, MITOCHONDRIAL"/>
    <property type="match status" value="1"/>
</dbReference>
<dbReference type="PANTHER" id="PTHR43261">
    <property type="entry name" value="TRANSLATION ELONGATION FACTOR G-RELATED"/>
    <property type="match status" value="1"/>
</dbReference>
<dbReference type="Pfam" id="PF00679">
    <property type="entry name" value="EFG_C"/>
    <property type="match status" value="1"/>
</dbReference>
<dbReference type="Pfam" id="PF14492">
    <property type="entry name" value="EFG_III"/>
    <property type="match status" value="1"/>
</dbReference>
<dbReference type="Pfam" id="PF03764">
    <property type="entry name" value="EFG_IV"/>
    <property type="match status" value="1"/>
</dbReference>
<dbReference type="Pfam" id="PF00009">
    <property type="entry name" value="GTP_EFTU"/>
    <property type="match status" value="1"/>
</dbReference>
<dbReference type="Pfam" id="PF03144">
    <property type="entry name" value="GTP_EFTU_D2"/>
    <property type="match status" value="1"/>
</dbReference>
<dbReference type="PRINTS" id="PR00315">
    <property type="entry name" value="ELONGATNFCT"/>
</dbReference>
<dbReference type="SMART" id="SM00838">
    <property type="entry name" value="EFG_C"/>
    <property type="match status" value="1"/>
</dbReference>
<dbReference type="SMART" id="SM00889">
    <property type="entry name" value="EFG_IV"/>
    <property type="match status" value="1"/>
</dbReference>
<dbReference type="SUPFAM" id="SSF54980">
    <property type="entry name" value="EF-G C-terminal domain-like"/>
    <property type="match status" value="2"/>
</dbReference>
<dbReference type="SUPFAM" id="SSF52540">
    <property type="entry name" value="P-loop containing nucleoside triphosphate hydrolases"/>
    <property type="match status" value="1"/>
</dbReference>
<dbReference type="SUPFAM" id="SSF54211">
    <property type="entry name" value="Ribosomal protein S5 domain 2-like"/>
    <property type="match status" value="1"/>
</dbReference>
<dbReference type="SUPFAM" id="SSF50447">
    <property type="entry name" value="Translation proteins"/>
    <property type="match status" value="1"/>
</dbReference>
<dbReference type="PROSITE" id="PS00301">
    <property type="entry name" value="G_TR_1"/>
    <property type="match status" value="1"/>
</dbReference>
<dbReference type="PROSITE" id="PS51722">
    <property type="entry name" value="G_TR_2"/>
    <property type="match status" value="1"/>
</dbReference>
<evidence type="ECO:0000255" key="1">
    <source>
        <dbReference type="HAMAP-Rule" id="MF_00054"/>
    </source>
</evidence>
<organism>
    <name type="scientific">Nitrosomonas eutropha (strain DSM 101675 / C91 / Nm57)</name>
    <dbReference type="NCBI Taxonomy" id="335283"/>
    <lineage>
        <taxon>Bacteria</taxon>
        <taxon>Pseudomonadati</taxon>
        <taxon>Pseudomonadota</taxon>
        <taxon>Betaproteobacteria</taxon>
        <taxon>Nitrosomonadales</taxon>
        <taxon>Nitrosomonadaceae</taxon>
        <taxon>Nitrosomonas</taxon>
    </lineage>
</organism>
<gene>
    <name evidence="1" type="primary">fusA</name>
    <name type="ordered locus">Neut_0555</name>
</gene>
<comment type="function">
    <text evidence="1">Catalyzes the GTP-dependent ribosomal translocation step during translation elongation. During this step, the ribosome changes from the pre-translocational (PRE) to the post-translocational (POST) state as the newly formed A-site-bound peptidyl-tRNA and P-site-bound deacylated tRNA move to the P and E sites, respectively. Catalyzes the coordinated movement of the two tRNA molecules, the mRNA and conformational changes in the ribosome.</text>
</comment>
<comment type="subcellular location">
    <subcellularLocation>
        <location evidence="1">Cytoplasm</location>
    </subcellularLocation>
</comment>
<comment type="similarity">
    <text evidence="1">Belongs to the TRAFAC class translation factor GTPase superfamily. Classic translation factor GTPase family. EF-G/EF-2 subfamily.</text>
</comment>
<keyword id="KW-0963">Cytoplasm</keyword>
<keyword id="KW-0251">Elongation factor</keyword>
<keyword id="KW-0342">GTP-binding</keyword>
<keyword id="KW-0547">Nucleotide-binding</keyword>
<keyword id="KW-0648">Protein biosynthesis</keyword>
<accession>Q0AIJ8</accession>
<sequence length="696" mass="76926">MSKRNPLERYRNIGIMAHIDAGKTTTSERILFYTGVSHKLGEVHDGAATMDWMEQEQERGITITSAATTCFWKGMAGNYPEHRINVIDTPGHVDFTIEVERSLRVLDGACTVFCSVGGVQPQTETVWRQANKYGVPRLAFVNKMDRSGANFMRVREQMISRLKANPVPIQLPIGAEDKFAGIIDLVKMKAVYWDDASQGTKFEEREIPASQQADAATWREKMIESAAEASEELMNKYLEAGDLAVEDIKQGLRARTINNEIVPMLCGTAFKNKGVQAMLDAVLDYLPSPLDVPAIKGVDENGLEDERGPSEDSPFAALAFKIATDPYVGQLIFFRVYSGTVKSGDTVFNPVKGKRERIGRLLQMHANQREEIKEVGTGDIAAAVGLKEVTTGDTLCDPNHVITLERMDFPEPVIHVAVEPKTKIDQEKMGIALNRLAQEDPSFRVRTDEESGQTIISGMGELHLEIIVDRMKREFGVEANVGAPQVAYREAIRKQVEIEGKFVKQSGGRGQYGHVWLRMEPNEAGKGFEFVDEIKGGAVPREYIPAVEKGLRDSLSNGVLAGYPVVDVKIALFDGSYHDVDSNENAFKMAASIAFKDGMKKASPVLLEPMMAVEVETPSEFMGNVVGDLSSRRGIIQGMEDIPGFKVIRSEVPLAEMFGYSTILRSATQGRATYSMEFKHYSEAPKNVAEAIISKK</sequence>
<proteinExistence type="inferred from homology"/>
<reference key="1">
    <citation type="journal article" date="2007" name="Environ. Microbiol.">
        <title>Whole-genome analysis of the ammonia-oxidizing bacterium, Nitrosomonas eutropha C91: implications for niche adaptation.</title>
        <authorList>
            <person name="Stein L.Y."/>
            <person name="Arp D.J."/>
            <person name="Berube P.M."/>
            <person name="Chain P.S."/>
            <person name="Hauser L."/>
            <person name="Jetten M.S."/>
            <person name="Klotz M.G."/>
            <person name="Larimer F.W."/>
            <person name="Norton J.M."/>
            <person name="Op den Camp H.J.M."/>
            <person name="Shin M."/>
            <person name="Wei X."/>
        </authorList>
    </citation>
    <scope>NUCLEOTIDE SEQUENCE [LARGE SCALE GENOMIC DNA]</scope>
    <source>
        <strain>DSM 101675 / C91 / Nm57</strain>
    </source>
</reference>
<protein>
    <recommendedName>
        <fullName evidence="1">Elongation factor G</fullName>
        <shortName evidence="1">EF-G</shortName>
    </recommendedName>
</protein>